<protein>
    <recommendedName>
        <fullName evidence="3">Small ribosomal subunit protein eS30</fullName>
    </recommendedName>
    <alternativeName>
        <fullName>40S ribosomal protein S30</fullName>
    </alternativeName>
</protein>
<comment type="miscellaneous">
    <text>This ribosomal protein is synthesized as a C-terminal extension protein (CEP) of a ubiquitin-like protein.</text>
</comment>
<comment type="similarity">
    <text evidence="3">Belongs to the eukaryotic ribosomal protein eS30 family.</text>
</comment>
<comment type="sequence caution" evidence="3">
    <conflict type="erroneous initiation">
        <sequence resource="EMBL-CDS" id="CAA44545"/>
    </conflict>
</comment>
<dbReference type="EMBL" id="X62671">
    <property type="protein sequence ID" value="CAA44546.1"/>
    <property type="molecule type" value="mRNA"/>
</dbReference>
<dbReference type="EMBL" id="X62671">
    <property type="protein sequence ID" value="CAA44545.1"/>
    <property type="status" value="ALT_INIT"/>
    <property type="molecule type" value="mRNA"/>
</dbReference>
<dbReference type="SMR" id="P62864"/>
<dbReference type="IntAct" id="P62864">
    <property type="interactions" value="1"/>
</dbReference>
<dbReference type="MINT" id="P62864"/>
<dbReference type="AGR" id="RGD:61938"/>
<dbReference type="RGD" id="61938">
    <property type="gene designation" value="Fau"/>
</dbReference>
<dbReference type="Proteomes" id="UP000002494">
    <property type="component" value="Unplaced"/>
</dbReference>
<dbReference type="GO" id="GO:0005737">
    <property type="term" value="C:cytoplasm"/>
    <property type="evidence" value="ECO:0000318"/>
    <property type="project" value="GO_Central"/>
</dbReference>
<dbReference type="GO" id="GO:0022626">
    <property type="term" value="C:cytosolic ribosome"/>
    <property type="evidence" value="ECO:0000266"/>
    <property type="project" value="RGD"/>
</dbReference>
<dbReference type="GO" id="GO:0022627">
    <property type="term" value="C:cytosolic small ribosomal subunit"/>
    <property type="evidence" value="ECO:0000266"/>
    <property type="project" value="RGD"/>
</dbReference>
<dbReference type="GO" id="GO:0005615">
    <property type="term" value="C:extracellular space"/>
    <property type="evidence" value="ECO:0000266"/>
    <property type="project" value="RGD"/>
</dbReference>
<dbReference type="GO" id="GO:0005634">
    <property type="term" value="C:nucleus"/>
    <property type="evidence" value="ECO:0000318"/>
    <property type="project" value="GO_Central"/>
</dbReference>
<dbReference type="GO" id="GO:0031386">
    <property type="term" value="F:protein tag activity"/>
    <property type="evidence" value="ECO:0000318"/>
    <property type="project" value="GO_Central"/>
</dbReference>
<dbReference type="GO" id="GO:0003735">
    <property type="term" value="F:structural constituent of ribosome"/>
    <property type="evidence" value="ECO:0000266"/>
    <property type="project" value="RGD"/>
</dbReference>
<dbReference type="GO" id="GO:0031625">
    <property type="term" value="F:ubiquitin protein ligase binding"/>
    <property type="evidence" value="ECO:0000318"/>
    <property type="project" value="GO_Central"/>
</dbReference>
<dbReference type="GO" id="GO:0061844">
    <property type="term" value="P:antimicrobial humoral immune response mediated by antimicrobial peptide"/>
    <property type="evidence" value="ECO:0000266"/>
    <property type="project" value="RGD"/>
</dbReference>
<dbReference type="GO" id="GO:0050830">
    <property type="term" value="P:defense response to Gram-positive bacterium"/>
    <property type="evidence" value="ECO:0000266"/>
    <property type="project" value="RGD"/>
</dbReference>
<dbReference type="GO" id="GO:0002227">
    <property type="term" value="P:innate immune response in mucosa"/>
    <property type="evidence" value="ECO:0000266"/>
    <property type="project" value="RGD"/>
</dbReference>
<dbReference type="GO" id="GO:0019941">
    <property type="term" value="P:modification-dependent protein catabolic process"/>
    <property type="evidence" value="ECO:0000318"/>
    <property type="project" value="GO_Central"/>
</dbReference>
<dbReference type="GO" id="GO:0016567">
    <property type="term" value="P:protein ubiquitination"/>
    <property type="evidence" value="ECO:0000318"/>
    <property type="project" value="GO_Central"/>
</dbReference>
<dbReference type="GO" id="GO:0006412">
    <property type="term" value="P:translation"/>
    <property type="evidence" value="ECO:0007669"/>
    <property type="project" value="InterPro"/>
</dbReference>
<dbReference type="InterPro" id="IPR006846">
    <property type="entry name" value="Ribosomal_eS30"/>
</dbReference>
<dbReference type="PANTHER" id="PTHR12650">
    <property type="entry name" value="40S RIBOSOMAL PROTEIN S30/UBIQUITIN-LIKE PROTEIN FUBI"/>
    <property type="match status" value="1"/>
</dbReference>
<dbReference type="PANTHER" id="PTHR12650:SF15">
    <property type="entry name" value="RIBOSOMAL PROTEIN S30, ISOFORM A"/>
    <property type="match status" value="1"/>
</dbReference>
<dbReference type="Pfam" id="PF04758">
    <property type="entry name" value="Ribosomal_S30"/>
    <property type="match status" value="1"/>
</dbReference>
<accession>P62864</accession>
<accession>Q05472</accession>
<accession>Q95261</accession>
<gene>
    <name type="primary">Fau</name>
</gene>
<organism>
    <name type="scientific">Rattus norvegicus</name>
    <name type="common">Rat</name>
    <dbReference type="NCBI Taxonomy" id="10116"/>
    <lineage>
        <taxon>Eukaryota</taxon>
        <taxon>Metazoa</taxon>
        <taxon>Chordata</taxon>
        <taxon>Craniata</taxon>
        <taxon>Vertebrata</taxon>
        <taxon>Euteleostomi</taxon>
        <taxon>Mammalia</taxon>
        <taxon>Eutheria</taxon>
        <taxon>Euarchontoglires</taxon>
        <taxon>Glires</taxon>
        <taxon>Rodentia</taxon>
        <taxon>Myomorpha</taxon>
        <taxon>Muroidea</taxon>
        <taxon>Muridae</taxon>
        <taxon>Murinae</taxon>
        <taxon>Rattus</taxon>
    </lineage>
</organism>
<evidence type="ECO:0000250" key="1">
    <source>
        <dbReference type="UniProtKB" id="P62862"/>
    </source>
</evidence>
<evidence type="ECO:0000256" key="2">
    <source>
        <dbReference type="SAM" id="MobiDB-lite"/>
    </source>
</evidence>
<evidence type="ECO:0000305" key="3"/>
<keyword id="KW-0903">Direct protein sequencing</keyword>
<keyword id="KW-1185">Reference proteome</keyword>
<keyword id="KW-0687">Ribonucleoprotein</keyword>
<keyword id="KW-0689">Ribosomal protein</keyword>
<sequence>KVHGSLARAGKVRGQTPKVAKQEKKKKKTGRAKRRMQYNRRFVNVVPTFGKKKGPNANS</sequence>
<feature type="chain" id="PRO_0000174003" description="Small ribosomal subunit protein eS30">
    <location>
        <begin position="1"/>
        <end position="59"/>
    </location>
</feature>
<feature type="region of interest" description="Disordered" evidence="2">
    <location>
        <begin position="1"/>
        <end position="35"/>
    </location>
</feature>
<feature type="compositionally biased region" description="Basic residues" evidence="2">
    <location>
        <begin position="23"/>
        <end position="35"/>
    </location>
</feature>
<feature type="modified residue" description="N6-succinyllysine" evidence="1">
    <location>
        <position position="51"/>
    </location>
</feature>
<reference key="1">
    <citation type="journal article" date="1993" name="J. Biol. Chem.">
        <title>The carboxyl extension of a ubiquitin-like protein is rat ribosomal protein S30.</title>
        <authorList>
            <person name="Olvera J."/>
            <person name="Wool I.G."/>
        </authorList>
    </citation>
    <scope>NUCLEOTIDE SEQUENCE [MRNA]</scope>
    <scope>PROTEIN SEQUENCE OF 1-18</scope>
    <source>
        <strain>Sprague-Dawley</strain>
        <tissue>Liver</tissue>
    </source>
</reference>
<name>RS30_RAT</name>
<proteinExistence type="evidence at protein level"/>